<keyword id="KW-1015">Disulfide bond</keyword>
<keyword id="KW-0646">Protease inhibitor</keyword>
<keyword id="KW-0964">Secreted</keyword>
<keyword id="KW-0722">Serine protease inhibitor</keyword>
<keyword id="KW-0800">Toxin</keyword>
<proteinExistence type="evidence at transcript level"/>
<accession>D2Y490</accession>
<protein>
    <recommendedName>
        <fullName evidence="3">Kunitz-type serine protease inhibitor conotoxin Cal9.1c</fullName>
    </recommendedName>
    <alternativeName>
        <fullName evidence="4">Conkunitzin-Cal9.1c</fullName>
    </alternativeName>
</protein>
<feature type="propeptide" id="PRO_5000566308" evidence="5">
    <location>
        <begin position="1" status="less than"/>
        <end position="2"/>
    </location>
</feature>
<feature type="peptide" id="PRO_5000566309" description="Kunitz-type serine protease inhibitor conotoxin Cal9.1c" evidence="5">
    <location>
        <begin position="5"/>
        <end position="60"/>
    </location>
</feature>
<feature type="domain" description="BPTI/Kunitz inhibitor" evidence="2">
    <location>
        <begin position="7"/>
        <end position="57"/>
    </location>
</feature>
<feature type="site" description="Reactive bond for chymotrypsin" evidence="1">
    <location>
        <begin position="17"/>
        <end position="18"/>
    </location>
</feature>
<feature type="disulfide bond" evidence="2">
    <location>
        <begin position="7"/>
        <end position="57"/>
    </location>
</feature>
<feature type="disulfide bond" evidence="2">
    <location>
        <begin position="16"/>
        <end position="40"/>
    </location>
</feature>
<feature type="disulfide bond" evidence="2">
    <location>
        <begin position="32"/>
        <end position="53"/>
    </location>
</feature>
<feature type="non-terminal residue">
    <location>
        <position position="1"/>
    </location>
</feature>
<comment type="subcellular location">
    <subcellularLocation>
        <location evidence="5">Secreted</location>
    </subcellularLocation>
</comment>
<comment type="tissue specificity">
    <text evidence="5">Expressed by the venom duct.</text>
</comment>
<comment type="domain">
    <text>The cysteine framework is IX (C-C-C-C-C-C).</text>
</comment>
<comment type="similarity">
    <text evidence="4">Belongs to the venom Kunitz-type family.</text>
</comment>
<evidence type="ECO:0000250" key="1"/>
<evidence type="ECO:0000255" key="2">
    <source>
        <dbReference type="PROSITE-ProRule" id="PRU00031"/>
    </source>
</evidence>
<evidence type="ECO:0000303" key="3">
    <source>
    </source>
</evidence>
<evidence type="ECO:0000305" key="4"/>
<evidence type="ECO:0000305" key="5">
    <source>
    </source>
</evidence>
<name>VKT1C_CONCL</name>
<organism>
    <name type="scientific">Californiconus californicus</name>
    <name type="common">California cone</name>
    <name type="synonym">Conus californicus</name>
    <dbReference type="NCBI Taxonomy" id="1736779"/>
    <lineage>
        <taxon>Eukaryota</taxon>
        <taxon>Metazoa</taxon>
        <taxon>Spiralia</taxon>
        <taxon>Lophotrochozoa</taxon>
        <taxon>Mollusca</taxon>
        <taxon>Gastropoda</taxon>
        <taxon>Caenogastropoda</taxon>
        <taxon>Neogastropoda</taxon>
        <taxon>Conoidea</taxon>
        <taxon>Conidae</taxon>
        <taxon>Californiconus</taxon>
    </lineage>
</organism>
<reference key="1">
    <citation type="journal article" date="2011" name="Toxicon">
        <title>Diversity of conotoxin types from Conus californicus reflects a diversity of prey types and a novel evolutionary history.</title>
        <authorList>
            <person name="Elliger C.A."/>
            <person name="Richmond T.A."/>
            <person name="Lebaric Z.N."/>
            <person name="Pierce N.T."/>
            <person name="Sweedler J.V."/>
            <person name="Gilly W.F."/>
        </authorList>
    </citation>
    <scope>NUCLEOTIDE SEQUENCE [MRNA]</scope>
    <source>
        <tissue>Venom duct</tissue>
    </source>
</reference>
<dbReference type="EMBL" id="GU306154">
    <property type="protein sequence ID" value="ADB04233.1"/>
    <property type="molecule type" value="mRNA"/>
</dbReference>
<dbReference type="SMR" id="D2Y490"/>
<dbReference type="ConoServer" id="3964">
    <property type="toxin name" value="Conkunitzin-Cal9.1c precursor"/>
</dbReference>
<dbReference type="GO" id="GO:0005615">
    <property type="term" value="C:extracellular space"/>
    <property type="evidence" value="ECO:0007669"/>
    <property type="project" value="TreeGrafter"/>
</dbReference>
<dbReference type="GO" id="GO:0004867">
    <property type="term" value="F:serine-type endopeptidase inhibitor activity"/>
    <property type="evidence" value="ECO:0007669"/>
    <property type="project" value="UniProtKB-KW"/>
</dbReference>
<dbReference type="GO" id="GO:0090729">
    <property type="term" value="F:toxin activity"/>
    <property type="evidence" value="ECO:0007669"/>
    <property type="project" value="UniProtKB-KW"/>
</dbReference>
<dbReference type="CDD" id="cd00109">
    <property type="entry name" value="Kunitz-type"/>
    <property type="match status" value="1"/>
</dbReference>
<dbReference type="FunFam" id="4.10.410.10:FF:000004">
    <property type="entry name" value="Tissue factor pathway inhibitor"/>
    <property type="match status" value="1"/>
</dbReference>
<dbReference type="Gene3D" id="4.10.410.10">
    <property type="entry name" value="Pancreatic trypsin inhibitor Kunitz domain"/>
    <property type="match status" value="1"/>
</dbReference>
<dbReference type="InterPro" id="IPR002223">
    <property type="entry name" value="Kunitz_BPTI"/>
</dbReference>
<dbReference type="InterPro" id="IPR036880">
    <property type="entry name" value="Kunitz_BPTI_sf"/>
</dbReference>
<dbReference type="InterPro" id="IPR050098">
    <property type="entry name" value="TFPI/VKTCI-like"/>
</dbReference>
<dbReference type="PANTHER" id="PTHR10083:SF374">
    <property type="entry name" value="BPTI_KUNITZ INHIBITOR DOMAIN-CONTAINING PROTEIN"/>
    <property type="match status" value="1"/>
</dbReference>
<dbReference type="PANTHER" id="PTHR10083">
    <property type="entry name" value="KUNITZ-TYPE PROTEASE INHIBITOR-RELATED"/>
    <property type="match status" value="1"/>
</dbReference>
<dbReference type="Pfam" id="PF00014">
    <property type="entry name" value="Kunitz_BPTI"/>
    <property type="match status" value="1"/>
</dbReference>
<dbReference type="PRINTS" id="PR00759">
    <property type="entry name" value="BASICPTASE"/>
</dbReference>
<dbReference type="SMART" id="SM00131">
    <property type="entry name" value="KU"/>
    <property type="match status" value="1"/>
</dbReference>
<dbReference type="SUPFAM" id="SSF57362">
    <property type="entry name" value="BPTI-like"/>
    <property type="match status" value="1"/>
</dbReference>
<dbReference type="PROSITE" id="PS50279">
    <property type="entry name" value="BPTI_KUNITZ_2"/>
    <property type="match status" value="1"/>
</dbReference>
<sequence>RTKRDVCELPFEEGPCFAAIRVYAYNAETGNCEQLTYGGCEGNGNRFATLEDCDNACARY</sequence>